<evidence type="ECO:0000255" key="1">
    <source>
        <dbReference type="HAMAP-Rule" id="MF_00313"/>
    </source>
</evidence>
<reference key="1">
    <citation type="journal article" date="2007" name="PLoS Biol.">
        <title>Evolution of symbiotic bacteria in the distal human intestine.</title>
        <authorList>
            <person name="Xu J."/>
            <person name="Mahowald M.A."/>
            <person name="Ley R.E."/>
            <person name="Lozupone C.A."/>
            <person name="Hamady M."/>
            <person name="Martens E.C."/>
            <person name="Henrissat B."/>
            <person name="Coutinho P.M."/>
            <person name="Minx P."/>
            <person name="Latreille P."/>
            <person name="Cordum H."/>
            <person name="Van Brunt A."/>
            <person name="Kim K."/>
            <person name="Fulton R.S."/>
            <person name="Fulton L.A."/>
            <person name="Clifton S.W."/>
            <person name="Wilson R.K."/>
            <person name="Knight R.D."/>
            <person name="Gordon J.I."/>
        </authorList>
    </citation>
    <scope>NUCLEOTIDE SEQUENCE [LARGE SCALE GENOMIC DNA]</scope>
    <source>
        <strain>ATCC 8503 / DSM 20701 / CIP 104284 / JCM 5825 / NCTC 11152</strain>
    </source>
</reference>
<comment type="catalytic activity">
    <reaction evidence="1">
        <text>L-glutamine + H2O = L-glutamate + NH4(+)</text>
        <dbReference type="Rhea" id="RHEA:15889"/>
        <dbReference type="ChEBI" id="CHEBI:15377"/>
        <dbReference type="ChEBI" id="CHEBI:28938"/>
        <dbReference type="ChEBI" id="CHEBI:29985"/>
        <dbReference type="ChEBI" id="CHEBI:58359"/>
        <dbReference type="EC" id="3.5.1.2"/>
    </reaction>
</comment>
<comment type="subunit">
    <text evidence="1">Homotetramer.</text>
</comment>
<comment type="similarity">
    <text evidence="1">Belongs to the glutaminase family.</text>
</comment>
<name>GLSA_PARD8</name>
<proteinExistence type="inferred from homology"/>
<accession>A6LA76</accession>
<dbReference type="EC" id="3.5.1.2" evidence="1"/>
<dbReference type="EMBL" id="CP000140">
    <property type="protein sequence ID" value="ABR42590.1"/>
    <property type="molecule type" value="Genomic_DNA"/>
</dbReference>
<dbReference type="RefSeq" id="WP_005857387.1">
    <property type="nucleotide sequence ID" value="NC_009615.1"/>
</dbReference>
<dbReference type="SMR" id="A6LA76"/>
<dbReference type="STRING" id="435591.BDI_0820"/>
<dbReference type="PaxDb" id="435591-BDI_0820"/>
<dbReference type="GeneID" id="93521549"/>
<dbReference type="KEGG" id="pdi:BDI_0820"/>
<dbReference type="eggNOG" id="COG2066">
    <property type="taxonomic scope" value="Bacteria"/>
</dbReference>
<dbReference type="HOGENOM" id="CLU_027932_1_0_10"/>
<dbReference type="BioCyc" id="PDIS435591:G1G5A-840-MONOMER"/>
<dbReference type="Proteomes" id="UP000000566">
    <property type="component" value="Chromosome"/>
</dbReference>
<dbReference type="GO" id="GO:0004359">
    <property type="term" value="F:glutaminase activity"/>
    <property type="evidence" value="ECO:0007669"/>
    <property type="project" value="UniProtKB-UniRule"/>
</dbReference>
<dbReference type="GO" id="GO:0006537">
    <property type="term" value="P:glutamate biosynthetic process"/>
    <property type="evidence" value="ECO:0007669"/>
    <property type="project" value="TreeGrafter"/>
</dbReference>
<dbReference type="GO" id="GO:0006543">
    <property type="term" value="P:glutamine catabolic process"/>
    <property type="evidence" value="ECO:0007669"/>
    <property type="project" value="TreeGrafter"/>
</dbReference>
<dbReference type="Gene3D" id="3.40.710.10">
    <property type="entry name" value="DD-peptidase/beta-lactamase superfamily"/>
    <property type="match status" value="1"/>
</dbReference>
<dbReference type="HAMAP" id="MF_00313">
    <property type="entry name" value="Glutaminase"/>
    <property type="match status" value="1"/>
</dbReference>
<dbReference type="InterPro" id="IPR012338">
    <property type="entry name" value="Beta-lactam/transpept-like"/>
</dbReference>
<dbReference type="InterPro" id="IPR015868">
    <property type="entry name" value="Glutaminase"/>
</dbReference>
<dbReference type="NCBIfam" id="TIGR03814">
    <property type="entry name" value="Gln_ase"/>
    <property type="match status" value="1"/>
</dbReference>
<dbReference type="NCBIfam" id="NF009020">
    <property type="entry name" value="PRK12356.1"/>
    <property type="match status" value="1"/>
</dbReference>
<dbReference type="PANTHER" id="PTHR12544">
    <property type="entry name" value="GLUTAMINASE"/>
    <property type="match status" value="1"/>
</dbReference>
<dbReference type="PANTHER" id="PTHR12544:SF48">
    <property type="entry name" value="GLUTAMINASE 1"/>
    <property type="match status" value="1"/>
</dbReference>
<dbReference type="Pfam" id="PF04960">
    <property type="entry name" value="Glutaminase"/>
    <property type="match status" value="1"/>
</dbReference>
<dbReference type="SUPFAM" id="SSF56601">
    <property type="entry name" value="beta-lactamase/transpeptidase-like"/>
    <property type="match status" value="1"/>
</dbReference>
<keyword id="KW-0378">Hydrolase</keyword>
<keyword id="KW-1185">Reference proteome</keyword>
<gene>
    <name evidence="1" type="primary">glsA</name>
    <name type="ordered locus">BDI_0820</name>
</gene>
<protein>
    <recommendedName>
        <fullName evidence="1">Glutaminase</fullName>
        <ecNumber evidence="1">3.5.1.2</ecNumber>
    </recommendedName>
</protein>
<organism>
    <name type="scientific">Parabacteroides distasonis (strain ATCC 8503 / DSM 20701 / CIP 104284 / JCM 5825 / NCTC 11152)</name>
    <dbReference type="NCBI Taxonomy" id="435591"/>
    <lineage>
        <taxon>Bacteria</taxon>
        <taxon>Pseudomonadati</taxon>
        <taxon>Bacteroidota</taxon>
        <taxon>Bacteroidia</taxon>
        <taxon>Bacteroidales</taxon>
        <taxon>Tannerellaceae</taxon>
        <taxon>Parabacteroides</taxon>
    </lineage>
</organism>
<feature type="chain" id="PRO_1000048338" description="Glutaminase">
    <location>
        <begin position="1"/>
        <end position="321"/>
    </location>
</feature>
<feature type="binding site" evidence="1">
    <location>
        <position position="69"/>
    </location>
    <ligand>
        <name>substrate</name>
    </ligand>
</feature>
<feature type="binding site" evidence="1">
    <location>
        <position position="120"/>
    </location>
    <ligand>
        <name>substrate</name>
    </ligand>
</feature>
<feature type="binding site" evidence="1">
    <location>
        <position position="165"/>
    </location>
    <ligand>
        <name>substrate</name>
    </ligand>
</feature>
<feature type="binding site" evidence="1">
    <location>
        <position position="172"/>
    </location>
    <ligand>
        <name>substrate</name>
    </ligand>
</feature>
<feature type="binding site" evidence="1">
    <location>
        <position position="196"/>
    </location>
    <ligand>
        <name>substrate</name>
    </ligand>
</feature>
<feature type="binding site" evidence="1">
    <location>
        <position position="248"/>
    </location>
    <ligand>
        <name>substrate</name>
    </ligand>
</feature>
<feature type="binding site" evidence="1">
    <location>
        <position position="266"/>
    </location>
    <ligand>
        <name>substrate</name>
    </ligand>
</feature>
<sequence length="321" mass="34670">MDKKITIAQIKEVAQQAYDLYKTNTDGKNADYIPYLANINKNLFGISICLLNGQTIEVGDSEYRFGIESVSKVHTAILVLRQYGAKELLEKIGADATGLPFNSIIAILLENDHPSTPLVNAGAITACSMVKPVGDSKQKWDAIVANITDLCGSAPQLIDELYKSESATNFNNRSIAWLLKNYNRIYDDPDMSLDLYTRQCSLGITAKQLSVAAATVANLGLNPVTKKQVFDAELSPKITSMISTVGFYEHTGDWLYTSGIPAKTGVGGGVMGVLPGQFGISAFAPPIDQAGNSVKAQLAIKYVMNKLGLNVFNGHRVTIVD</sequence>